<gene>
    <name type="ORF">DDB_G0283463</name>
</gene>
<organism>
    <name type="scientific">Dictyostelium discoideum</name>
    <name type="common">Social amoeba</name>
    <dbReference type="NCBI Taxonomy" id="44689"/>
    <lineage>
        <taxon>Eukaryota</taxon>
        <taxon>Amoebozoa</taxon>
        <taxon>Evosea</taxon>
        <taxon>Eumycetozoa</taxon>
        <taxon>Dictyostelia</taxon>
        <taxon>Dictyosteliales</taxon>
        <taxon>Dictyosteliaceae</taxon>
        <taxon>Dictyostelium</taxon>
    </lineage>
</organism>
<accession>Q54R00</accession>
<keyword id="KW-1185">Reference proteome</keyword>
<feature type="chain" id="PRO_0000350880" description="Putative uncharacterized protein DDB_G0283463">
    <location>
        <begin position="1"/>
        <end position="46"/>
    </location>
</feature>
<proteinExistence type="predicted"/>
<dbReference type="EMBL" id="AAFI02000055">
    <property type="protein sequence ID" value="EAL65716.1"/>
    <property type="molecule type" value="Genomic_DNA"/>
</dbReference>
<dbReference type="RefSeq" id="XP_639091.1">
    <property type="nucleotide sequence ID" value="XM_633999.1"/>
</dbReference>
<dbReference type="PaxDb" id="44689-DDB0185536"/>
<dbReference type="EnsemblProtists" id="EAL65716">
    <property type="protein sequence ID" value="EAL65716"/>
    <property type="gene ID" value="DDB_G0283463"/>
</dbReference>
<dbReference type="GeneID" id="8624115"/>
<dbReference type="KEGG" id="ddi:DDB_G0283463"/>
<dbReference type="dictyBase" id="DDB_G0283463"/>
<dbReference type="VEuPathDB" id="AmoebaDB:DDB_G0283463"/>
<dbReference type="HOGENOM" id="CLU_3192445_0_0_1"/>
<dbReference type="InParanoid" id="Q54R00"/>
<dbReference type="PRO" id="PR:Q54R00"/>
<dbReference type="Proteomes" id="UP000002195">
    <property type="component" value="Chromosome 4"/>
</dbReference>
<name>Y5536_DICDI</name>
<sequence length="46" mass="5461">MINNSSKVRENGESYDVDLVVNLTVKIRFFREWINFIFVIYVGDYG</sequence>
<reference key="1">
    <citation type="journal article" date="2005" name="Nature">
        <title>The genome of the social amoeba Dictyostelium discoideum.</title>
        <authorList>
            <person name="Eichinger L."/>
            <person name="Pachebat J.A."/>
            <person name="Gloeckner G."/>
            <person name="Rajandream M.A."/>
            <person name="Sucgang R."/>
            <person name="Berriman M."/>
            <person name="Song J."/>
            <person name="Olsen R."/>
            <person name="Szafranski K."/>
            <person name="Xu Q."/>
            <person name="Tunggal B."/>
            <person name="Kummerfeld S."/>
            <person name="Madera M."/>
            <person name="Konfortov B.A."/>
            <person name="Rivero F."/>
            <person name="Bankier A.T."/>
            <person name="Lehmann R."/>
            <person name="Hamlin N."/>
            <person name="Davies R."/>
            <person name="Gaudet P."/>
            <person name="Fey P."/>
            <person name="Pilcher K."/>
            <person name="Chen G."/>
            <person name="Saunders D."/>
            <person name="Sodergren E.J."/>
            <person name="Davis P."/>
            <person name="Kerhornou A."/>
            <person name="Nie X."/>
            <person name="Hall N."/>
            <person name="Anjard C."/>
            <person name="Hemphill L."/>
            <person name="Bason N."/>
            <person name="Farbrother P."/>
            <person name="Desany B."/>
            <person name="Just E."/>
            <person name="Morio T."/>
            <person name="Rost R."/>
            <person name="Churcher C.M."/>
            <person name="Cooper J."/>
            <person name="Haydock S."/>
            <person name="van Driessche N."/>
            <person name="Cronin A."/>
            <person name="Goodhead I."/>
            <person name="Muzny D.M."/>
            <person name="Mourier T."/>
            <person name="Pain A."/>
            <person name="Lu M."/>
            <person name="Harper D."/>
            <person name="Lindsay R."/>
            <person name="Hauser H."/>
            <person name="James K.D."/>
            <person name="Quiles M."/>
            <person name="Madan Babu M."/>
            <person name="Saito T."/>
            <person name="Buchrieser C."/>
            <person name="Wardroper A."/>
            <person name="Felder M."/>
            <person name="Thangavelu M."/>
            <person name="Johnson D."/>
            <person name="Knights A."/>
            <person name="Loulseged H."/>
            <person name="Mungall K.L."/>
            <person name="Oliver K."/>
            <person name="Price C."/>
            <person name="Quail M.A."/>
            <person name="Urushihara H."/>
            <person name="Hernandez J."/>
            <person name="Rabbinowitsch E."/>
            <person name="Steffen D."/>
            <person name="Sanders M."/>
            <person name="Ma J."/>
            <person name="Kohara Y."/>
            <person name="Sharp S."/>
            <person name="Simmonds M.N."/>
            <person name="Spiegler S."/>
            <person name="Tivey A."/>
            <person name="Sugano S."/>
            <person name="White B."/>
            <person name="Walker D."/>
            <person name="Woodward J.R."/>
            <person name="Winckler T."/>
            <person name="Tanaka Y."/>
            <person name="Shaulsky G."/>
            <person name="Schleicher M."/>
            <person name="Weinstock G.M."/>
            <person name="Rosenthal A."/>
            <person name="Cox E.C."/>
            <person name="Chisholm R.L."/>
            <person name="Gibbs R.A."/>
            <person name="Loomis W.F."/>
            <person name="Platzer M."/>
            <person name="Kay R.R."/>
            <person name="Williams J.G."/>
            <person name="Dear P.H."/>
            <person name="Noegel A.A."/>
            <person name="Barrell B.G."/>
            <person name="Kuspa A."/>
        </authorList>
    </citation>
    <scope>NUCLEOTIDE SEQUENCE [LARGE SCALE GENOMIC DNA]</scope>
    <source>
        <strain>AX4</strain>
    </source>
</reference>
<protein>
    <recommendedName>
        <fullName>Putative uncharacterized protein DDB_G0283463</fullName>
    </recommendedName>
</protein>